<protein>
    <recommendedName>
        <fullName>Translationally-controlled tumor protein homolog</fullName>
        <shortName>TCTP</shortName>
    </recommendedName>
</protein>
<reference key="1">
    <citation type="submission" date="2002-09" db="EMBL/GenBank/DDBJ databases">
        <title>Identification of TCTP/HRF homolog from Schistosoma haematobium.</title>
        <authorList>
            <person name="Gnanasekar M."/>
            <person name="Ramaswamy K."/>
        </authorList>
    </citation>
    <scope>NUCLEOTIDE SEQUENCE [MRNA]</scope>
</reference>
<accession>Q8I8A2</accession>
<gene>
    <name type="primary">TCTP</name>
</gene>
<name>TCTP_SCHHA</name>
<proteinExistence type="evidence at transcript level"/>
<sequence length="152" mass="17400">MNFREERYDTIMFTDSHCPRVVADFFYEVESRFTTASSKVDGRLIGANPSGEGEDDEDVDDTSERVIDLVHANGFISVPYDLKSYKAQLKSYLKAIKERLQKTVPDKLPLLESQVNKYRKDVFANFDQYECFTGPSTNPEAMVVLMNFVCGR</sequence>
<keyword id="KW-0106">Calcium</keyword>
<keyword id="KW-0963">Cytoplasm</keyword>
<organism>
    <name type="scientific">Schistosoma haematobium</name>
    <name type="common">Blood fluke</name>
    <dbReference type="NCBI Taxonomy" id="6185"/>
    <lineage>
        <taxon>Eukaryota</taxon>
        <taxon>Metazoa</taxon>
        <taxon>Spiralia</taxon>
        <taxon>Lophotrochozoa</taxon>
        <taxon>Platyhelminthes</taxon>
        <taxon>Trematoda</taxon>
        <taxon>Digenea</taxon>
        <taxon>Strigeidida</taxon>
        <taxon>Schistosomatoidea</taxon>
        <taxon>Schistosomatidae</taxon>
        <taxon>Schistosoma</taxon>
    </lineage>
</organism>
<evidence type="ECO:0000250" key="1"/>
<evidence type="ECO:0000255" key="2">
    <source>
        <dbReference type="PROSITE-ProRule" id="PRU01133"/>
    </source>
</evidence>
<evidence type="ECO:0000305" key="3"/>
<comment type="function">
    <text evidence="1">Involved in calcium binding and microtubule stabilization.</text>
</comment>
<comment type="subcellular location">
    <subcellularLocation>
        <location evidence="1">Cytoplasm</location>
    </subcellularLocation>
</comment>
<comment type="similarity">
    <text evidence="2">Belongs to the TCTP family.</text>
</comment>
<comment type="sequence caution" evidence="3">
    <conflict type="erroneous initiation">
        <sequence resource="EMBL-CDS" id="AAN78324"/>
    </conflict>
</comment>
<feature type="chain" id="PRO_0000252309" description="Translationally-controlled tumor protein homolog">
    <location>
        <begin position="1"/>
        <end position="152" status="greater than"/>
    </location>
</feature>
<feature type="domain" description="TCTP" evidence="2">
    <location>
        <begin position="1"/>
        <end position="152" status="greater than"/>
    </location>
</feature>
<feature type="non-terminal residue">
    <location>
        <position position="152"/>
    </location>
</feature>
<dbReference type="EMBL" id="AY157847">
    <property type="protein sequence ID" value="AAN78324.1"/>
    <property type="status" value="ALT_INIT"/>
    <property type="molecule type" value="mRNA"/>
</dbReference>
<dbReference type="SMR" id="Q8I8A2"/>
<dbReference type="GO" id="GO:0005737">
    <property type="term" value="C:cytoplasm"/>
    <property type="evidence" value="ECO:0007669"/>
    <property type="project" value="UniProtKB-SubCell"/>
</dbReference>
<dbReference type="GO" id="GO:0005509">
    <property type="term" value="F:calcium ion binding"/>
    <property type="evidence" value="ECO:0007669"/>
    <property type="project" value="TreeGrafter"/>
</dbReference>
<dbReference type="Gene3D" id="2.170.150.10">
    <property type="entry name" value="Metal Binding Protein, Guanine Nucleotide Exchange Factor, Chain A"/>
    <property type="match status" value="1"/>
</dbReference>
<dbReference type="InterPro" id="IPR011057">
    <property type="entry name" value="Mss4-like_sf"/>
</dbReference>
<dbReference type="InterPro" id="IPR011323">
    <property type="entry name" value="Mss4/transl-control_tumour"/>
</dbReference>
<dbReference type="InterPro" id="IPR034737">
    <property type="entry name" value="TCTP"/>
</dbReference>
<dbReference type="InterPro" id="IPR018103">
    <property type="entry name" value="Translation_control_tumour_CS"/>
</dbReference>
<dbReference type="InterPro" id="IPR018105">
    <property type="entry name" value="Translational_control_tumour_p"/>
</dbReference>
<dbReference type="PANTHER" id="PTHR11991">
    <property type="entry name" value="TRANSLATIONALLY CONTROLLED TUMOR PROTEIN-RELATED"/>
    <property type="match status" value="1"/>
</dbReference>
<dbReference type="PANTHER" id="PTHR11991:SF0">
    <property type="entry name" value="TRANSLATIONALLY-CONTROLLED TUMOR PROTEIN"/>
    <property type="match status" value="1"/>
</dbReference>
<dbReference type="Pfam" id="PF00838">
    <property type="entry name" value="TCTP"/>
    <property type="match status" value="1"/>
</dbReference>
<dbReference type="SUPFAM" id="SSF51316">
    <property type="entry name" value="Mss4-like"/>
    <property type="match status" value="1"/>
</dbReference>
<dbReference type="PROSITE" id="PS01002">
    <property type="entry name" value="TCTP_1"/>
    <property type="match status" value="1"/>
</dbReference>
<dbReference type="PROSITE" id="PS51797">
    <property type="entry name" value="TCTP_3"/>
    <property type="match status" value="1"/>
</dbReference>